<accession>Q4IR08</accession>
<accession>A0A0E0RLZ1</accession>
<accession>V6QV01</accession>
<sequence>MSVVSLLGVNVLNNPAKFVDKYEFEITFECLEQLEKDLEWKLTYVGSATSDQYDQELDSLLVGPIPVGVNKFIFEADAPNISRIPDAEILGVTVILLTCAYDGREFIRVGYYVNNEYDSEELNAEPPVKPIIERVKRNVLAEKPRVTRFAIKWDSEASAPAEYPPEQPEADLVADGDEYGAEEADEEAAEEAEEEAKSKGKASSGEDAEMAGVEHEGENAADEDELSDDGSVDIEGESEDDLEEEEEGEGEGEADGDAMEVDSAEKPATSTAKPVSVAS</sequence>
<proteinExistence type="inferred from homology"/>
<feature type="chain" id="PRO_0000284037" description="Histone chaperone ASF1">
    <location>
        <begin position="1"/>
        <end position="279"/>
    </location>
</feature>
<feature type="region of interest" description="Disordered" evidence="2">
    <location>
        <begin position="179"/>
        <end position="279"/>
    </location>
</feature>
<feature type="compositionally biased region" description="Acidic residues" evidence="2">
    <location>
        <begin position="179"/>
        <end position="194"/>
    </location>
</feature>
<feature type="compositionally biased region" description="Acidic residues" evidence="2">
    <location>
        <begin position="219"/>
        <end position="262"/>
    </location>
</feature>
<feature type="compositionally biased region" description="Polar residues" evidence="2">
    <location>
        <begin position="268"/>
        <end position="279"/>
    </location>
</feature>
<evidence type="ECO:0000250" key="1"/>
<evidence type="ECO:0000256" key="2">
    <source>
        <dbReference type="SAM" id="MobiDB-lite"/>
    </source>
</evidence>
<evidence type="ECO:0000305" key="3"/>
<gene>
    <name type="primary">ASF1</name>
    <name type="ORF">FGRRES_00350</name>
    <name type="ORF">FGSG_00350</name>
</gene>
<protein>
    <recommendedName>
        <fullName>Histone chaperone ASF1</fullName>
    </recommendedName>
    <alternativeName>
        <fullName>Anti-silencing function protein 1</fullName>
    </alternativeName>
</protein>
<reference key="1">
    <citation type="journal article" date="2007" name="Science">
        <title>The Fusarium graminearum genome reveals a link between localized polymorphism and pathogen specialization.</title>
        <authorList>
            <person name="Cuomo C.A."/>
            <person name="Gueldener U."/>
            <person name="Xu J.-R."/>
            <person name="Trail F."/>
            <person name="Turgeon B.G."/>
            <person name="Di Pietro A."/>
            <person name="Walton J.D."/>
            <person name="Ma L.-J."/>
            <person name="Baker S.E."/>
            <person name="Rep M."/>
            <person name="Adam G."/>
            <person name="Antoniw J."/>
            <person name="Baldwin T."/>
            <person name="Calvo S.E."/>
            <person name="Chang Y.-L."/>
            <person name="DeCaprio D."/>
            <person name="Gale L.R."/>
            <person name="Gnerre S."/>
            <person name="Goswami R.S."/>
            <person name="Hammond-Kosack K."/>
            <person name="Harris L.J."/>
            <person name="Hilburn K."/>
            <person name="Kennell J.C."/>
            <person name="Kroken S."/>
            <person name="Magnuson J.K."/>
            <person name="Mannhaupt G."/>
            <person name="Mauceli E.W."/>
            <person name="Mewes H.-W."/>
            <person name="Mitterbauer R."/>
            <person name="Muehlbauer G."/>
            <person name="Muensterkoetter M."/>
            <person name="Nelson D."/>
            <person name="O'Donnell K."/>
            <person name="Ouellet T."/>
            <person name="Qi W."/>
            <person name="Quesneville H."/>
            <person name="Roncero M.I.G."/>
            <person name="Seong K.-Y."/>
            <person name="Tetko I.V."/>
            <person name="Urban M."/>
            <person name="Waalwijk C."/>
            <person name="Ward T.J."/>
            <person name="Yao J."/>
            <person name="Birren B.W."/>
            <person name="Kistler H.C."/>
        </authorList>
    </citation>
    <scope>NUCLEOTIDE SEQUENCE [LARGE SCALE GENOMIC DNA]</scope>
    <source>
        <strain>ATCC MYA-4620 / CBS 123657 / FGSC 9075 / NRRL 31084 / PH-1</strain>
    </source>
</reference>
<reference key="2">
    <citation type="journal article" date="2010" name="Nature">
        <title>Comparative genomics reveals mobile pathogenicity chromosomes in Fusarium.</title>
        <authorList>
            <person name="Ma L.-J."/>
            <person name="van der Does H.C."/>
            <person name="Borkovich K.A."/>
            <person name="Coleman J.J."/>
            <person name="Daboussi M.-J."/>
            <person name="Di Pietro A."/>
            <person name="Dufresne M."/>
            <person name="Freitag M."/>
            <person name="Grabherr M."/>
            <person name="Henrissat B."/>
            <person name="Houterman P.M."/>
            <person name="Kang S."/>
            <person name="Shim W.-B."/>
            <person name="Woloshuk C."/>
            <person name="Xie X."/>
            <person name="Xu J.-R."/>
            <person name="Antoniw J."/>
            <person name="Baker S.E."/>
            <person name="Bluhm B.H."/>
            <person name="Breakspear A."/>
            <person name="Brown D.W."/>
            <person name="Butchko R.A.E."/>
            <person name="Chapman S."/>
            <person name="Coulson R."/>
            <person name="Coutinho P.M."/>
            <person name="Danchin E.G.J."/>
            <person name="Diener A."/>
            <person name="Gale L.R."/>
            <person name="Gardiner D.M."/>
            <person name="Goff S."/>
            <person name="Hammond-Kosack K.E."/>
            <person name="Hilburn K."/>
            <person name="Hua-Van A."/>
            <person name="Jonkers W."/>
            <person name="Kazan K."/>
            <person name="Kodira C.D."/>
            <person name="Koehrsen M."/>
            <person name="Kumar L."/>
            <person name="Lee Y.-H."/>
            <person name="Li L."/>
            <person name="Manners J.M."/>
            <person name="Miranda-Saavedra D."/>
            <person name="Mukherjee M."/>
            <person name="Park G."/>
            <person name="Park J."/>
            <person name="Park S.-Y."/>
            <person name="Proctor R.H."/>
            <person name="Regev A."/>
            <person name="Ruiz-Roldan M.C."/>
            <person name="Sain D."/>
            <person name="Sakthikumar S."/>
            <person name="Sykes S."/>
            <person name="Schwartz D.C."/>
            <person name="Turgeon B.G."/>
            <person name="Wapinski I."/>
            <person name="Yoder O."/>
            <person name="Young S."/>
            <person name="Zeng Q."/>
            <person name="Zhou S."/>
            <person name="Galagan J."/>
            <person name="Cuomo C.A."/>
            <person name="Kistler H.C."/>
            <person name="Rep M."/>
        </authorList>
    </citation>
    <scope>GENOME REANNOTATION</scope>
    <source>
        <strain>ATCC MYA-4620 / CBS 123657 / FGSC 9075 / NRRL 31084 / PH-1</strain>
    </source>
</reference>
<reference key="3">
    <citation type="journal article" date="2015" name="BMC Genomics">
        <title>The completed genome sequence of the pathogenic ascomycete fungus Fusarium graminearum.</title>
        <authorList>
            <person name="King R."/>
            <person name="Urban M."/>
            <person name="Hammond-Kosack M.C.U."/>
            <person name="Hassani-Pak K."/>
            <person name="Hammond-Kosack K.E."/>
        </authorList>
    </citation>
    <scope>NUCLEOTIDE SEQUENCE [LARGE SCALE GENOMIC DNA]</scope>
    <source>
        <strain>ATCC MYA-4620 / CBS 123657 / FGSC 9075 / NRRL 31084 / PH-1</strain>
    </source>
</reference>
<keyword id="KW-0143">Chaperone</keyword>
<keyword id="KW-0156">Chromatin regulator</keyword>
<keyword id="KW-0539">Nucleus</keyword>
<keyword id="KW-1185">Reference proteome</keyword>
<keyword id="KW-0804">Transcription</keyword>
<keyword id="KW-0805">Transcription regulation</keyword>
<name>ASF1_GIBZE</name>
<comment type="function">
    <text evidence="1">Histone chaperone that facilitates histone deposition and histone exchange and removal during nucleosome assembly and disassembly.</text>
</comment>
<comment type="subunit">
    <text evidence="1">Interacts with histone H3 and histone H4.</text>
</comment>
<comment type="subcellular location">
    <subcellularLocation>
        <location evidence="1">Nucleus</location>
    </subcellularLocation>
</comment>
<comment type="similarity">
    <text evidence="3">Belongs to the ASF1 family.</text>
</comment>
<organism>
    <name type="scientific">Gibberella zeae (strain ATCC MYA-4620 / CBS 123657 / FGSC 9075 / NRRL 31084 / PH-1)</name>
    <name type="common">Wheat head blight fungus</name>
    <name type="synonym">Fusarium graminearum</name>
    <dbReference type="NCBI Taxonomy" id="229533"/>
    <lineage>
        <taxon>Eukaryota</taxon>
        <taxon>Fungi</taxon>
        <taxon>Dikarya</taxon>
        <taxon>Ascomycota</taxon>
        <taxon>Pezizomycotina</taxon>
        <taxon>Sordariomycetes</taxon>
        <taxon>Hypocreomycetidae</taxon>
        <taxon>Hypocreales</taxon>
        <taxon>Nectriaceae</taxon>
        <taxon>Fusarium</taxon>
    </lineage>
</organism>
<dbReference type="EMBL" id="DS231663">
    <property type="protein sequence ID" value="ESU05522.1"/>
    <property type="molecule type" value="Genomic_DNA"/>
</dbReference>
<dbReference type="EMBL" id="HG970332">
    <property type="protein sequence ID" value="CEF72266.1"/>
    <property type="molecule type" value="Genomic_DNA"/>
</dbReference>
<dbReference type="RefSeq" id="XP_011316007.1">
    <property type="nucleotide sequence ID" value="XM_011317705.1"/>
</dbReference>
<dbReference type="SMR" id="Q4IR08"/>
<dbReference type="FunCoup" id="Q4IR08">
    <property type="interactions" value="830"/>
</dbReference>
<dbReference type="STRING" id="229533.Q4IR08"/>
<dbReference type="GeneID" id="23547841"/>
<dbReference type="KEGG" id="fgr:FGSG_00350"/>
<dbReference type="VEuPathDB" id="FungiDB:FGRAMPH1_01G00927"/>
<dbReference type="eggNOG" id="KOG3265">
    <property type="taxonomic scope" value="Eukaryota"/>
</dbReference>
<dbReference type="HOGENOM" id="CLU_060354_0_2_1"/>
<dbReference type="InParanoid" id="Q4IR08"/>
<dbReference type="OrthoDB" id="19530at110618"/>
<dbReference type="PHI-base" id="PHI:1608"/>
<dbReference type="Proteomes" id="UP000070720">
    <property type="component" value="Chromosome 1"/>
</dbReference>
<dbReference type="GO" id="GO:0000785">
    <property type="term" value="C:chromatin"/>
    <property type="evidence" value="ECO:0007669"/>
    <property type="project" value="TreeGrafter"/>
</dbReference>
<dbReference type="GO" id="GO:0005634">
    <property type="term" value="C:nucleus"/>
    <property type="evidence" value="ECO:0007669"/>
    <property type="project" value="UniProtKB-SubCell"/>
</dbReference>
<dbReference type="GO" id="GO:0042393">
    <property type="term" value="F:histone binding"/>
    <property type="evidence" value="ECO:0007669"/>
    <property type="project" value="InterPro"/>
</dbReference>
<dbReference type="GO" id="GO:0006335">
    <property type="term" value="P:DNA replication-dependent chromatin assembly"/>
    <property type="evidence" value="ECO:0007669"/>
    <property type="project" value="TreeGrafter"/>
</dbReference>
<dbReference type="GO" id="GO:0006334">
    <property type="term" value="P:nucleosome assembly"/>
    <property type="evidence" value="ECO:0007669"/>
    <property type="project" value="InterPro"/>
</dbReference>
<dbReference type="GO" id="GO:0006337">
    <property type="term" value="P:nucleosome disassembly"/>
    <property type="evidence" value="ECO:0007669"/>
    <property type="project" value="InterPro"/>
</dbReference>
<dbReference type="FunFam" id="2.60.40.1490:FF:000001">
    <property type="entry name" value="Histone chaperone ASF1"/>
    <property type="match status" value="1"/>
</dbReference>
<dbReference type="Gene3D" id="2.60.40.1490">
    <property type="entry name" value="Histone chaperone ASF1-like"/>
    <property type="match status" value="1"/>
</dbReference>
<dbReference type="InterPro" id="IPR006818">
    <property type="entry name" value="ASF1-like"/>
</dbReference>
<dbReference type="InterPro" id="IPR036747">
    <property type="entry name" value="ASF1-like_sf"/>
</dbReference>
<dbReference type="InterPro" id="IPR017282">
    <property type="entry name" value="Hist_deposition_Asf1"/>
</dbReference>
<dbReference type="PANTHER" id="PTHR12040">
    <property type="entry name" value="ANTI-SILENCING PROTEIN 1"/>
    <property type="match status" value="1"/>
</dbReference>
<dbReference type="PANTHER" id="PTHR12040:SF0">
    <property type="entry name" value="HISTONE CHAPERONE ASF1"/>
    <property type="match status" value="1"/>
</dbReference>
<dbReference type="Pfam" id="PF04729">
    <property type="entry name" value="ASF1_hist_chap"/>
    <property type="match status" value="1"/>
</dbReference>
<dbReference type="PIRSF" id="PIRSF037759">
    <property type="entry name" value="Histone_Asf1"/>
    <property type="match status" value="1"/>
</dbReference>
<dbReference type="SUPFAM" id="SSF101546">
    <property type="entry name" value="ASF1-like"/>
    <property type="match status" value="1"/>
</dbReference>